<feature type="chain" id="PRO_0000319044" description="Thimet oligopeptidase">
    <location>
        <begin position="1"/>
        <end position="687"/>
    </location>
</feature>
<feature type="active site" evidence="4">
    <location>
        <position position="474"/>
    </location>
</feature>
<feature type="binding site" evidence="4">
    <location>
        <position position="473"/>
    </location>
    <ligand>
        <name>Zn(2+)</name>
        <dbReference type="ChEBI" id="CHEBI:29105"/>
        <note>catalytic</note>
    </ligand>
</feature>
<feature type="binding site" evidence="4">
    <location>
        <position position="477"/>
    </location>
    <ligand>
        <name>Zn(2+)</name>
        <dbReference type="ChEBI" id="CHEBI:29105"/>
        <note>catalytic</note>
    </ligand>
</feature>
<feature type="binding site" evidence="4">
    <location>
        <position position="480"/>
    </location>
    <ligand>
        <name>Zn(2+)</name>
        <dbReference type="ChEBI" id="CHEBI:29105"/>
        <note>catalytic</note>
    </ligand>
</feature>
<feature type="modified residue" description="Phosphoserine" evidence="3">
    <location>
        <position position="16"/>
    </location>
</feature>
<feature type="modified residue" description="Phosphoserine" evidence="9">
    <location>
        <position position="172"/>
    </location>
</feature>
<feature type="modified residue" description="N6-acetyllysine" evidence="3">
    <location>
        <position position="257"/>
    </location>
</feature>
<feature type="modified residue" description="Phosphotyrosine" evidence="8">
    <location>
        <position position="278"/>
    </location>
</feature>
<feature type="modified residue" description="N6-acetyllysine" evidence="3">
    <location>
        <position position="538"/>
    </location>
</feature>
<feature type="sequence conflict" description="In Ref. 1; AAG35061 and 3; AAH31722." evidence="6" ref="1 3">
    <original>N</original>
    <variation>D</variation>
    <location>
        <position position="132"/>
    </location>
</feature>
<feature type="sequence conflict" description="In Ref. 1; AAG35061." evidence="6" ref="1">
    <original>RE</original>
    <variation>KK</variation>
    <location>
        <begin position="193"/>
        <end position="194"/>
    </location>
</feature>
<feature type="sequence conflict" description="In Ref. 1; AAG35061." evidence="6" ref="1">
    <original>S</original>
    <variation>I</variation>
    <location>
        <position position="205"/>
    </location>
</feature>
<feature type="sequence conflict" description="In Ref. 1; AAG35061." evidence="6" ref="1">
    <original>S</original>
    <variation>G</variation>
    <location>
        <position position="529"/>
    </location>
</feature>
<sequence length="687" mass="78026">MKPPAACAGDVVDAASPASTVNHLRWDLSAQQIRALTTQLIEQTKCVYDRVGAQNFEDVSYESTLKALADVEVTYTVQRNILDFPQHVSPCKDIRAASTEADKKLSEFDVEMSMRQDVYQRVVWLQEKTPKNSLKPEAARYLERLIKLGRRNGLHLPQDTQEKIKNIKKRLSLLCIDFNKNLNEDTTFLPFTREELGGLPEDFLSSLEKAEDGKLKVTLKYPHYFPLLKKCHVPETRRLLEEAFNCRCKEENCAILKELVSLRAQKSSLLGFHTHADYVLEMNMAKTSQTVATFLDELAQKLKPLGEQERAVILELKEAECAKRGLPFDGRIHAWDMRYYMNQVEETRYRVDQNLLKEYFPMQVVTRGLLAIYQELLGLTFTLEEGAAAWHEDVRLYSVRDAASGEEIGKFYLDLYPREGKYGHAACFGLQPGCLRQDGSRQLAVAAMVANFTKPTPDAPSLLQHDEVETYFHEFGHVMHQLCSQAEFAMFSGTHVERDFVEAPSQMLENWVWEKEPLMRMSQHYRTGSEAPQDLLEKLIKSRQANAGLFNLRQIVLAKVDQVLHTQTDADPAEEYARLCQEILGVPATPGTNMPATFGHLAGGYDAQYYGYLWSEVYSMDMFHTRFKQEGVLSPKVGMDYRTSILRPGGSEDASAMLKQFLGRDPKQDAFLLSKGLQVEGSEAPAC</sequence>
<proteinExistence type="evidence at protein level"/>
<comment type="function">
    <text evidence="1 3 5">Involved in the metabolism of neuropeptides under 20 amino acid residues long (PubMed:10969067). Involved in cytoplasmic peptide degradation. Able to degrade the amyloid-beta precursor protein and generate amyloidogenic fragments (By similarity). Also acts as a regulator of cannabinoid signaling pathway by mediating degradation of hemopressin, an antagonist peptide of the cannabinoid receptor CNR1 (By similarity).</text>
</comment>
<comment type="catalytic activity">
    <reaction evidence="7">
        <text>Preferential cleavage of bonds with hydrophobic residues at P1, P2 and P3' and a small residue at P1' in substrates of 5 to 15 residues.</text>
        <dbReference type="EC" id="3.4.24.15"/>
    </reaction>
</comment>
<comment type="cofactor">
    <cofactor evidence="3">
        <name>Zn(2+)</name>
        <dbReference type="ChEBI" id="CHEBI:29105"/>
    </cofactor>
    <text evidence="3">Binds 1 zinc ion per subunit.</text>
</comment>
<comment type="subunit">
    <text evidence="2">Monomer.</text>
</comment>
<comment type="subcellular location">
    <subcellularLocation>
        <location evidence="2">Cytoplasm</location>
    </subcellularLocation>
</comment>
<comment type="similarity">
    <text evidence="6">Belongs to the peptidase M3 family.</text>
</comment>
<organism>
    <name type="scientific">Mus musculus</name>
    <name type="common">Mouse</name>
    <dbReference type="NCBI Taxonomy" id="10090"/>
    <lineage>
        <taxon>Eukaryota</taxon>
        <taxon>Metazoa</taxon>
        <taxon>Chordata</taxon>
        <taxon>Craniata</taxon>
        <taxon>Vertebrata</taxon>
        <taxon>Euteleostomi</taxon>
        <taxon>Mammalia</taxon>
        <taxon>Eutheria</taxon>
        <taxon>Euarchontoglires</taxon>
        <taxon>Glires</taxon>
        <taxon>Rodentia</taxon>
        <taxon>Myomorpha</taxon>
        <taxon>Muroidea</taxon>
        <taxon>Muridae</taxon>
        <taxon>Murinae</taxon>
        <taxon>Mus</taxon>
        <taxon>Mus</taxon>
    </lineage>
</organism>
<keyword id="KW-0007">Acetylation</keyword>
<keyword id="KW-0963">Cytoplasm</keyword>
<keyword id="KW-0378">Hydrolase</keyword>
<keyword id="KW-0479">Metal-binding</keyword>
<keyword id="KW-0482">Metalloprotease</keyword>
<keyword id="KW-0597">Phosphoprotein</keyword>
<keyword id="KW-0645">Protease</keyword>
<keyword id="KW-1185">Reference proteome</keyword>
<keyword id="KW-0862">Zinc</keyword>
<accession>Q8C1A5</accession>
<accession>Q8K0J9</accession>
<accession>Q8K2D4</accession>
<accession>Q9EPX1</accession>
<name>THOP1_MOUSE</name>
<protein>
    <recommendedName>
        <fullName>Thimet oligopeptidase</fullName>
        <ecNumber evidence="7">3.4.24.15</ecNumber>
    </recommendedName>
</protein>
<reference key="1">
    <citation type="journal article" date="2000" name="J. Biol. Chem.">
        <title>The neuropeptide processing enzyme EC 3.4.24.15 is modulated by protein kinase A phosphorylation.</title>
        <authorList>
            <person name="Tullai J.W."/>
            <person name="Cummins P.M."/>
            <person name="Pabon A."/>
            <person name="Roberts J.L."/>
            <person name="Lopingco M.C."/>
            <person name="Shrimpton C.N."/>
            <person name="Smith A.I."/>
            <person name="Martignetti J.A."/>
            <person name="Ferro E.S."/>
            <person name="Glucksman M.J."/>
        </authorList>
    </citation>
    <scope>NUCLEOTIDE SEQUENCE [MRNA]</scope>
    <scope>FUNCTION</scope>
    <scope>CATALYTIC ACTIVITY</scope>
</reference>
<reference key="2">
    <citation type="journal article" date="2005" name="Science">
        <title>The transcriptional landscape of the mammalian genome.</title>
        <authorList>
            <person name="Carninci P."/>
            <person name="Kasukawa T."/>
            <person name="Katayama S."/>
            <person name="Gough J."/>
            <person name="Frith M.C."/>
            <person name="Maeda N."/>
            <person name="Oyama R."/>
            <person name="Ravasi T."/>
            <person name="Lenhard B."/>
            <person name="Wells C."/>
            <person name="Kodzius R."/>
            <person name="Shimokawa K."/>
            <person name="Bajic V.B."/>
            <person name="Brenner S.E."/>
            <person name="Batalov S."/>
            <person name="Forrest A.R."/>
            <person name="Zavolan M."/>
            <person name="Davis M.J."/>
            <person name="Wilming L.G."/>
            <person name="Aidinis V."/>
            <person name="Allen J.E."/>
            <person name="Ambesi-Impiombato A."/>
            <person name="Apweiler R."/>
            <person name="Aturaliya R.N."/>
            <person name="Bailey T.L."/>
            <person name="Bansal M."/>
            <person name="Baxter L."/>
            <person name="Beisel K.W."/>
            <person name="Bersano T."/>
            <person name="Bono H."/>
            <person name="Chalk A.M."/>
            <person name="Chiu K.P."/>
            <person name="Choudhary V."/>
            <person name="Christoffels A."/>
            <person name="Clutterbuck D.R."/>
            <person name="Crowe M.L."/>
            <person name="Dalla E."/>
            <person name="Dalrymple B.P."/>
            <person name="de Bono B."/>
            <person name="Della Gatta G."/>
            <person name="di Bernardo D."/>
            <person name="Down T."/>
            <person name="Engstrom P."/>
            <person name="Fagiolini M."/>
            <person name="Faulkner G."/>
            <person name="Fletcher C.F."/>
            <person name="Fukushima T."/>
            <person name="Furuno M."/>
            <person name="Futaki S."/>
            <person name="Gariboldi M."/>
            <person name="Georgii-Hemming P."/>
            <person name="Gingeras T.R."/>
            <person name="Gojobori T."/>
            <person name="Green R.E."/>
            <person name="Gustincich S."/>
            <person name="Harbers M."/>
            <person name="Hayashi Y."/>
            <person name="Hensch T.K."/>
            <person name="Hirokawa N."/>
            <person name="Hill D."/>
            <person name="Huminiecki L."/>
            <person name="Iacono M."/>
            <person name="Ikeo K."/>
            <person name="Iwama A."/>
            <person name="Ishikawa T."/>
            <person name="Jakt M."/>
            <person name="Kanapin A."/>
            <person name="Katoh M."/>
            <person name="Kawasawa Y."/>
            <person name="Kelso J."/>
            <person name="Kitamura H."/>
            <person name="Kitano H."/>
            <person name="Kollias G."/>
            <person name="Krishnan S.P."/>
            <person name="Kruger A."/>
            <person name="Kummerfeld S.K."/>
            <person name="Kurochkin I.V."/>
            <person name="Lareau L.F."/>
            <person name="Lazarevic D."/>
            <person name="Lipovich L."/>
            <person name="Liu J."/>
            <person name="Liuni S."/>
            <person name="McWilliam S."/>
            <person name="Madan Babu M."/>
            <person name="Madera M."/>
            <person name="Marchionni L."/>
            <person name="Matsuda H."/>
            <person name="Matsuzawa S."/>
            <person name="Miki H."/>
            <person name="Mignone F."/>
            <person name="Miyake S."/>
            <person name="Morris K."/>
            <person name="Mottagui-Tabar S."/>
            <person name="Mulder N."/>
            <person name="Nakano N."/>
            <person name="Nakauchi H."/>
            <person name="Ng P."/>
            <person name="Nilsson R."/>
            <person name="Nishiguchi S."/>
            <person name="Nishikawa S."/>
            <person name="Nori F."/>
            <person name="Ohara O."/>
            <person name="Okazaki Y."/>
            <person name="Orlando V."/>
            <person name="Pang K.C."/>
            <person name="Pavan W.J."/>
            <person name="Pavesi G."/>
            <person name="Pesole G."/>
            <person name="Petrovsky N."/>
            <person name="Piazza S."/>
            <person name="Reed J."/>
            <person name="Reid J.F."/>
            <person name="Ring B.Z."/>
            <person name="Ringwald M."/>
            <person name="Rost B."/>
            <person name="Ruan Y."/>
            <person name="Salzberg S.L."/>
            <person name="Sandelin A."/>
            <person name="Schneider C."/>
            <person name="Schoenbach C."/>
            <person name="Sekiguchi K."/>
            <person name="Semple C.A."/>
            <person name="Seno S."/>
            <person name="Sessa L."/>
            <person name="Sheng Y."/>
            <person name="Shibata Y."/>
            <person name="Shimada H."/>
            <person name="Shimada K."/>
            <person name="Silva D."/>
            <person name="Sinclair B."/>
            <person name="Sperling S."/>
            <person name="Stupka E."/>
            <person name="Sugiura K."/>
            <person name="Sultana R."/>
            <person name="Takenaka Y."/>
            <person name="Taki K."/>
            <person name="Tammoja K."/>
            <person name="Tan S.L."/>
            <person name="Tang S."/>
            <person name="Taylor M.S."/>
            <person name="Tegner J."/>
            <person name="Teichmann S.A."/>
            <person name="Ueda H.R."/>
            <person name="van Nimwegen E."/>
            <person name="Verardo R."/>
            <person name="Wei C.L."/>
            <person name="Yagi K."/>
            <person name="Yamanishi H."/>
            <person name="Zabarovsky E."/>
            <person name="Zhu S."/>
            <person name="Zimmer A."/>
            <person name="Hide W."/>
            <person name="Bult C."/>
            <person name="Grimmond S.M."/>
            <person name="Teasdale R.D."/>
            <person name="Liu E.T."/>
            <person name="Brusic V."/>
            <person name="Quackenbush J."/>
            <person name="Wahlestedt C."/>
            <person name="Mattick J.S."/>
            <person name="Hume D.A."/>
            <person name="Kai C."/>
            <person name="Sasaki D."/>
            <person name="Tomaru Y."/>
            <person name="Fukuda S."/>
            <person name="Kanamori-Katayama M."/>
            <person name="Suzuki M."/>
            <person name="Aoki J."/>
            <person name="Arakawa T."/>
            <person name="Iida J."/>
            <person name="Imamura K."/>
            <person name="Itoh M."/>
            <person name="Kato T."/>
            <person name="Kawaji H."/>
            <person name="Kawagashira N."/>
            <person name="Kawashima T."/>
            <person name="Kojima M."/>
            <person name="Kondo S."/>
            <person name="Konno H."/>
            <person name="Nakano K."/>
            <person name="Ninomiya N."/>
            <person name="Nishio T."/>
            <person name="Okada M."/>
            <person name="Plessy C."/>
            <person name="Shibata K."/>
            <person name="Shiraki T."/>
            <person name="Suzuki S."/>
            <person name="Tagami M."/>
            <person name="Waki K."/>
            <person name="Watahiki A."/>
            <person name="Okamura-Oho Y."/>
            <person name="Suzuki H."/>
            <person name="Kawai J."/>
            <person name="Hayashizaki Y."/>
        </authorList>
    </citation>
    <scope>NUCLEOTIDE SEQUENCE [LARGE SCALE MRNA]</scope>
    <source>
        <strain>C57BL/6J</strain>
        <tissue>Skin</tissue>
    </source>
</reference>
<reference key="3">
    <citation type="journal article" date="2004" name="Genome Res.">
        <title>The status, quality, and expansion of the NIH full-length cDNA project: the Mammalian Gene Collection (MGC).</title>
        <authorList>
            <consortium name="The MGC Project Team"/>
        </authorList>
    </citation>
    <scope>NUCLEOTIDE SEQUENCE [LARGE SCALE MRNA]</scope>
    <source>
        <strain>Czech II</strain>
        <strain>FVB/N</strain>
        <tissue>Colon</tissue>
        <tissue>Mammary tumor</tissue>
    </source>
</reference>
<reference key="4">
    <citation type="journal article" date="2008" name="J. Proteome Res.">
        <title>Large-scale identification and evolution indexing of tyrosine phosphorylation sites from murine brain.</title>
        <authorList>
            <person name="Ballif B.A."/>
            <person name="Carey G.R."/>
            <person name="Sunyaev S.R."/>
            <person name="Gygi S.P."/>
        </authorList>
    </citation>
    <scope>PHOSPHORYLATION [LARGE SCALE ANALYSIS] AT TYR-278</scope>
    <scope>IDENTIFICATION BY MASS SPECTROMETRY [LARGE SCALE ANALYSIS]</scope>
    <source>
        <tissue>Brain</tissue>
    </source>
</reference>
<reference key="5">
    <citation type="journal article" date="2010" name="Cell">
        <title>A tissue-specific atlas of mouse protein phosphorylation and expression.</title>
        <authorList>
            <person name="Huttlin E.L."/>
            <person name="Jedrychowski M.P."/>
            <person name="Elias J.E."/>
            <person name="Goswami T."/>
            <person name="Rad R."/>
            <person name="Beausoleil S.A."/>
            <person name="Villen J."/>
            <person name="Haas W."/>
            <person name="Sowa M.E."/>
            <person name="Gygi S.P."/>
        </authorList>
    </citation>
    <scope>PHOSPHORYLATION [LARGE SCALE ANALYSIS] AT SER-172</scope>
    <scope>IDENTIFICATION BY MASS SPECTROMETRY [LARGE SCALE ANALYSIS]</scope>
    <source>
        <tissue>Brain</tissue>
        <tissue>Brown adipose tissue</tissue>
        <tissue>Heart</tissue>
        <tissue>Kidney</tissue>
        <tissue>Liver</tissue>
        <tissue>Lung</tissue>
        <tissue>Pancreas</tissue>
        <tissue>Spleen</tissue>
        <tissue>Testis</tissue>
    </source>
</reference>
<evidence type="ECO:0000250" key="1">
    <source>
        <dbReference type="UniProtKB" id="P24155"/>
    </source>
</evidence>
<evidence type="ECO:0000250" key="2">
    <source>
        <dbReference type="UniProtKB" id="P47788"/>
    </source>
</evidence>
<evidence type="ECO:0000250" key="3">
    <source>
        <dbReference type="UniProtKB" id="P52888"/>
    </source>
</evidence>
<evidence type="ECO:0000255" key="4">
    <source>
        <dbReference type="PROSITE-ProRule" id="PRU10095"/>
    </source>
</evidence>
<evidence type="ECO:0000269" key="5">
    <source>
    </source>
</evidence>
<evidence type="ECO:0000305" key="6"/>
<evidence type="ECO:0000305" key="7">
    <source>
    </source>
</evidence>
<evidence type="ECO:0007744" key="8">
    <source>
    </source>
</evidence>
<evidence type="ECO:0007744" key="9">
    <source>
    </source>
</evidence>
<gene>
    <name type="primary">Thop1</name>
</gene>
<dbReference type="EC" id="3.4.24.15" evidence="7"/>
<dbReference type="EMBL" id="AF314187">
    <property type="protein sequence ID" value="AAG35061.1"/>
    <property type="molecule type" value="mRNA"/>
</dbReference>
<dbReference type="EMBL" id="AK028609">
    <property type="protein sequence ID" value="BAC26031.1"/>
    <property type="molecule type" value="mRNA"/>
</dbReference>
<dbReference type="EMBL" id="BC031175">
    <property type="protein sequence ID" value="AAH31175.1"/>
    <property type="molecule type" value="mRNA"/>
</dbReference>
<dbReference type="EMBL" id="BC031722">
    <property type="protein sequence ID" value="AAH31722.1"/>
    <property type="molecule type" value="mRNA"/>
</dbReference>
<dbReference type="CCDS" id="CCDS24042.1"/>
<dbReference type="RefSeq" id="NP_073144.3">
    <property type="nucleotide sequence ID" value="NM_022653.4"/>
</dbReference>
<dbReference type="SMR" id="Q8C1A5"/>
<dbReference type="BioGRID" id="206040">
    <property type="interactions" value="21"/>
</dbReference>
<dbReference type="FunCoup" id="Q8C1A5">
    <property type="interactions" value="1427"/>
</dbReference>
<dbReference type="STRING" id="10090.ENSMUSP00000005057"/>
<dbReference type="MEROPS" id="M03.001"/>
<dbReference type="GlyGen" id="Q8C1A5">
    <property type="glycosylation" value="2 sites, 1 O-linked glycan (1 site)"/>
</dbReference>
<dbReference type="iPTMnet" id="Q8C1A5"/>
<dbReference type="PhosphoSitePlus" id="Q8C1A5"/>
<dbReference type="SwissPalm" id="Q8C1A5"/>
<dbReference type="REPRODUCTION-2DPAGE" id="Q8C1A5"/>
<dbReference type="jPOST" id="Q8C1A5"/>
<dbReference type="PaxDb" id="10090-ENSMUSP00000005057"/>
<dbReference type="PeptideAtlas" id="Q8C1A5"/>
<dbReference type="ProteomicsDB" id="259022"/>
<dbReference type="Pumba" id="Q8C1A5"/>
<dbReference type="DNASU" id="50492"/>
<dbReference type="GeneID" id="50492"/>
<dbReference type="KEGG" id="mmu:50492"/>
<dbReference type="UCSC" id="uc007gfv.2">
    <property type="organism name" value="mouse"/>
</dbReference>
<dbReference type="AGR" id="MGI:1354165"/>
<dbReference type="CTD" id="7064"/>
<dbReference type="MGI" id="MGI:1354165">
    <property type="gene designation" value="Thop1"/>
</dbReference>
<dbReference type="eggNOG" id="KOG2089">
    <property type="taxonomic scope" value="Eukaryota"/>
</dbReference>
<dbReference type="InParanoid" id="Q8C1A5"/>
<dbReference type="OrthoDB" id="534666at2759"/>
<dbReference type="PhylomeDB" id="Q8C1A5"/>
<dbReference type="TreeFam" id="TF300459"/>
<dbReference type="BRENDA" id="3.4.24.15">
    <property type="organism ID" value="3474"/>
</dbReference>
<dbReference type="Reactome" id="R-MMU-983168">
    <property type="pathway name" value="Antigen processing: Ubiquitination &amp; Proteasome degradation"/>
</dbReference>
<dbReference type="BioGRID-ORCS" id="50492">
    <property type="hits" value="2 hits in 79 CRISPR screens"/>
</dbReference>
<dbReference type="ChiTaRS" id="Thop1">
    <property type="organism name" value="mouse"/>
</dbReference>
<dbReference type="PRO" id="PR:Q8C1A5"/>
<dbReference type="Proteomes" id="UP000000589">
    <property type="component" value="Unplaced"/>
</dbReference>
<dbReference type="RNAct" id="Q8C1A5">
    <property type="molecule type" value="protein"/>
</dbReference>
<dbReference type="GO" id="GO:0005737">
    <property type="term" value="C:cytoplasm"/>
    <property type="evidence" value="ECO:0007669"/>
    <property type="project" value="UniProtKB-SubCell"/>
</dbReference>
<dbReference type="GO" id="GO:0046872">
    <property type="term" value="F:metal ion binding"/>
    <property type="evidence" value="ECO:0007669"/>
    <property type="project" value="UniProtKB-KW"/>
</dbReference>
<dbReference type="GO" id="GO:0004222">
    <property type="term" value="F:metalloendopeptidase activity"/>
    <property type="evidence" value="ECO:0000314"/>
    <property type="project" value="MGI"/>
</dbReference>
<dbReference type="GO" id="GO:0035556">
    <property type="term" value="P:intracellular signal transduction"/>
    <property type="evidence" value="ECO:0000314"/>
    <property type="project" value="MGI"/>
</dbReference>
<dbReference type="GO" id="GO:0006518">
    <property type="term" value="P:peptide metabolic process"/>
    <property type="evidence" value="ECO:0000314"/>
    <property type="project" value="MGI"/>
</dbReference>
<dbReference type="GO" id="GO:0006508">
    <property type="term" value="P:proteolysis"/>
    <property type="evidence" value="ECO:0007669"/>
    <property type="project" value="UniProtKB-KW"/>
</dbReference>
<dbReference type="CDD" id="cd06455">
    <property type="entry name" value="M3A_TOP"/>
    <property type="match status" value="1"/>
</dbReference>
<dbReference type="FunFam" id="1.10.1370.10:FF:000027">
    <property type="entry name" value="Thimet oligopeptidase 1"/>
    <property type="match status" value="1"/>
</dbReference>
<dbReference type="FunFam" id="1.20.1050.40:FF:000001">
    <property type="entry name" value="Thimet oligopeptidase 1"/>
    <property type="match status" value="1"/>
</dbReference>
<dbReference type="FunFam" id="3.40.390.10:FF:000006">
    <property type="entry name" value="Thimet oligopeptidase 1"/>
    <property type="match status" value="1"/>
</dbReference>
<dbReference type="Gene3D" id="3.40.390.10">
    <property type="entry name" value="Collagenase (Catalytic Domain)"/>
    <property type="match status" value="1"/>
</dbReference>
<dbReference type="Gene3D" id="1.20.1050.40">
    <property type="entry name" value="Endopeptidase. Chain P, domain 1"/>
    <property type="match status" value="1"/>
</dbReference>
<dbReference type="Gene3D" id="1.10.1370.10">
    <property type="entry name" value="Neurolysin, domain 3"/>
    <property type="match status" value="1"/>
</dbReference>
<dbReference type="InterPro" id="IPR024079">
    <property type="entry name" value="MetalloPept_cat_dom_sf"/>
</dbReference>
<dbReference type="InterPro" id="IPR024077">
    <property type="entry name" value="Neurolysin/TOP_dom2"/>
</dbReference>
<dbReference type="InterPro" id="IPR024080">
    <property type="entry name" value="Neurolysin/TOP_N"/>
</dbReference>
<dbReference type="InterPro" id="IPR045090">
    <property type="entry name" value="Pept_M3A_M3B"/>
</dbReference>
<dbReference type="InterPro" id="IPR001567">
    <property type="entry name" value="Pept_M3A_M3B_dom"/>
</dbReference>
<dbReference type="PANTHER" id="PTHR11804">
    <property type="entry name" value="PROTEASE M3 THIMET OLIGOPEPTIDASE-RELATED"/>
    <property type="match status" value="1"/>
</dbReference>
<dbReference type="PANTHER" id="PTHR11804:SF50">
    <property type="entry name" value="THIMET OLIGOPEPTIDASE"/>
    <property type="match status" value="1"/>
</dbReference>
<dbReference type="Pfam" id="PF01432">
    <property type="entry name" value="Peptidase_M3"/>
    <property type="match status" value="1"/>
</dbReference>
<dbReference type="SUPFAM" id="SSF55486">
    <property type="entry name" value="Metalloproteases ('zincins'), catalytic domain"/>
    <property type="match status" value="1"/>
</dbReference>
<dbReference type="PROSITE" id="PS00142">
    <property type="entry name" value="ZINC_PROTEASE"/>
    <property type="match status" value="1"/>
</dbReference>